<keyword id="KW-0489">Methyltransferase</keyword>
<keyword id="KW-1185">Reference proteome</keyword>
<keyword id="KW-0949">S-adenosyl-L-methionine</keyword>
<keyword id="KW-0808">Transferase</keyword>
<keyword id="KW-0819">tRNA processing</keyword>
<organism>
    <name type="scientific">Alkalilimnicola ehrlichii (strain ATCC BAA-1101 / DSM 17681 / MLHE-1)</name>
    <dbReference type="NCBI Taxonomy" id="187272"/>
    <lineage>
        <taxon>Bacteria</taxon>
        <taxon>Pseudomonadati</taxon>
        <taxon>Pseudomonadota</taxon>
        <taxon>Gammaproteobacteria</taxon>
        <taxon>Chromatiales</taxon>
        <taxon>Ectothiorhodospiraceae</taxon>
        <taxon>Alkalilimnicola</taxon>
    </lineage>
</organism>
<evidence type="ECO:0000250" key="1"/>
<evidence type="ECO:0000255" key="2">
    <source>
        <dbReference type="HAMAP-Rule" id="MF_01057"/>
    </source>
</evidence>
<evidence type="ECO:0000256" key="3">
    <source>
        <dbReference type="SAM" id="MobiDB-lite"/>
    </source>
</evidence>
<gene>
    <name evidence="2" type="primary">trmB</name>
    <name type="ordered locus">Mlg_0033</name>
</gene>
<name>TRMB_ALKEH</name>
<sequence length="237" mass="27016">MERRADAATGKRPIRSFVRREGRLTAGQQRALELLWPAFGLERPPAGQPLDLDRAFGRRAPRILEIGFGNGESLAEQAATHPERDYLGIEVHRPGVGHLLMEVEKRHLGNVRVMMADAAEVLAHHIPDGSLHGVQLFFPDPWPKKRHHKRRLVQPQWVRAVAAKLAPGGFLHLATDWADYAEHMLDVLEAEPDLENTCGPRQFSPRGERPETKFERRGLRKGHQVFDLYYRKREHPG</sequence>
<protein>
    <recommendedName>
        <fullName evidence="2">tRNA (guanine-N(7)-)-methyltransferase</fullName>
        <ecNumber evidence="2">2.1.1.33</ecNumber>
    </recommendedName>
    <alternativeName>
        <fullName evidence="2">tRNA (guanine(46)-N(7))-methyltransferase</fullName>
    </alternativeName>
    <alternativeName>
        <fullName evidence="2">tRNA(m7G46)-methyltransferase</fullName>
    </alternativeName>
</protein>
<feature type="chain" id="PRO_0000288116" description="tRNA (guanine-N(7)-)-methyltransferase">
    <location>
        <begin position="1"/>
        <end position="237"/>
    </location>
</feature>
<feature type="region of interest" description="Disordered" evidence="3">
    <location>
        <begin position="197"/>
        <end position="217"/>
    </location>
</feature>
<feature type="compositionally biased region" description="Basic and acidic residues" evidence="3">
    <location>
        <begin position="206"/>
        <end position="217"/>
    </location>
</feature>
<feature type="active site" evidence="1">
    <location>
        <position position="140"/>
    </location>
</feature>
<feature type="binding site" evidence="2">
    <location>
        <position position="65"/>
    </location>
    <ligand>
        <name>S-adenosyl-L-methionine</name>
        <dbReference type="ChEBI" id="CHEBI:59789"/>
    </ligand>
</feature>
<feature type="binding site" evidence="2">
    <location>
        <position position="90"/>
    </location>
    <ligand>
        <name>S-adenosyl-L-methionine</name>
        <dbReference type="ChEBI" id="CHEBI:59789"/>
    </ligand>
</feature>
<feature type="binding site" evidence="2">
    <location>
        <position position="117"/>
    </location>
    <ligand>
        <name>S-adenosyl-L-methionine</name>
        <dbReference type="ChEBI" id="CHEBI:59789"/>
    </ligand>
</feature>
<feature type="binding site" evidence="2">
    <location>
        <position position="140"/>
    </location>
    <ligand>
        <name>S-adenosyl-L-methionine</name>
        <dbReference type="ChEBI" id="CHEBI:59789"/>
    </ligand>
</feature>
<feature type="binding site" evidence="2">
    <location>
        <position position="144"/>
    </location>
    <ligand>
        <name>substrate</name>
    </ligand>
</feature>
<feature type="binding site" evidence="2">
    <location>
        <position position="176"/>
    </location>
    <ligand>
        <name>substrate</name>
    </ligand>
</feature>
<feature type="binding site" evidence="2">
    <location>
        <begin position="212"/>
        <end position="215"/>
    </location>
    <ligand>
        <name>substrate</name>
    </ligand>
</feature>
<dbReference type="EC" id="2.1.1.33" evidence="2"/>
<dbReference type="EMBL" id="CP000453">
    <property type="protein sequence ID" value="ABI55392.1"/>
    <property type="molecule type" value="Genomic_DNA"/>
</dbReference>
<dbReference type="RefSeq" id="WP_011627788.1">
    <property type="nucleotide sequence ID" value="NC_008340.1"/>
</dbReference>
<dbReference type="SMR" id="Q0ACP5"/>
<dbReference type="KEGG" id="aeh:Mlg_0033"/>
<dbReference type="eggNOG" id="COG0220">
    <property type="taxonomic scope" value="Bacteria"/>
</dbReference>
<dbReference type="HOGENOM" id="CLU_050910_0_1_6"/>
<dbReference type="OrthoDB" id="9802090at2"/>
<dbReference type="UniPathway" id="UPA00989"/>
<dbReference type="Proteomes" id="UP000001962">
    <property type="component" value="Chromosome"/>
</dbReference>
<dbReference type="GO" id="GO:0043527">
    <property type="term" value="C:tRNA methyltransferase complex"/>
    <property type="evidence" value="ECO:0007669"/>
    <property type="project" value="TreeGrafter"/>
</dbReference>
<dbReference type="GO" id="GO:0008176">
    <property type="term" value="F:tRNA (guanine(46)-N7)-methyltransferase activity"/>
    <property type="evidence" value="ECO:0007669"/>
    <property type="project" value="UniProtKB-UniRule"/>
</dbReference>
<dbReference type="CDD" id="cd02440">
    <property type="entry name" value="AdoMet_MTases"/>
    <property type="match status" value="1"/>
</dbReference>
<dbReference type="Gene3D" id="3.40.50.150">
    <property type="entry name" value="Vaccinia Virus protein VP39"/>
    <property type="match status" value="1"/>
</dbReference>
<dbReference type="HAMAP" id="MF_01057">
    <property type="entry name" value="tRNA_methyltr_TrmB"/>
    <property type="match status" value="1"/>
</dbReference>
<dbReference type="InterPro" id="IPR029063">
    <property type="entry name" value="SAM-dependent_MTases_sf"/>
</dbReference>
<dbReference type="InterPro" id="IPR003358">
    <property type="entry name" value="tRNA_(Gua-N-7)_MeTrfase_Trmb"/>
</dbReference>
<dbReference type="InterPro" id="IPR055361">
    <property type="entry name" value="tRNA_methyltr_TrmB_bact"/>
</dbReference>
<dbReference type="NCBIfam" id="TIGR00091">
    <property type="entry name" value="tRNA (guanosine(46)-N7)-methyltransferase TrmB"/>
    <property type="match status" value="1"/>
</dbReference>
<dbReference type="PANTHER" id="PTHR23417">
    <property type="entry name" value="3-DEOXY-D-MANNO-OCTULOSONIC-ACID TRANSFERASE/TRNA GUANINE-N 7 - -METHYLTRANSFERASE"/>
    <property type="match status" value="1"/>
</dbReference>
<dbReference type="PANTHER" id="PTHR23417:SF14">
    <property type="entry name" value="PENTACOTRIPEPTIDE-REPEAT REGION OF PRORP DOMAIN-CONTAINING PROTEIN"/>
    <property type="match status" value="1"/>
</dbReference>
<dbReference type="Pfam" id="PF02390">
    <property type="entry name" value="Methyltransf_4"/>
    <property type="match status" value="1"/>
</dbReference>
<dbReference type="SUPFAM" id="SSF53335">
    <property type="entry name" value="S-adenosyl-L-methionine-dependent methyltransferases"/>
    <property type="match status" value="1"/>
</dbReference>
<dbReference type="PROSITE" id="PS51625">
    <property type="entry name" value="SAM_MT_TRMB"/>
    <property type="match status" value="1"/>
</dbReference>
<comment type="function">
    <text evidence="2">Catalyzes the formation of N(7)-methylguanine at position 46 (m7G46) in tRNA.</text>
</comment>
<comment type="catalytic activity">
    <reaction evidence="2">
        <text>guanosine(46) in tRNA + S-adenosyl-L-methionine = N(7)-methylguanosine(46) in tRNA + S-adenosyl-L-homocysteine</text>
        <dbReference type="Rhea" id="RHEA:42708"/>
        <dbReference type="Rhea" id="RHEA-COMP:10188"/>
        <dbReference type="Rhea" id="RHEA-COMP:10189"/>
        <dbReference type="ChEBI" id="CHEBI:57856"/>
        <dbReference type="ChEBI" id="CHEBI:59789"/>
        <dbReference type="ChEBI" id="CHEBI:74269"/>
        <dbReference type="ChEBI" id="CHEBI:74480"/>
        <dbReference type="EC" id="2.1.1.33"/>
    </reaction>
</comment>
<comment type="pathway">
    <text evidence="2">tRNA modification; N(7)-methylguanine-tRNA biosynthesis.</text>
</comment>
<comment type="similarity">
    <text evidence="2">Belongs to the class I-like SAM-binding methyltransferase superfamily. TrmB family.</text>
</comment>
<proteinExistence type="inferred from homology"/>
<reference key="1">
    <citation type="submission" date="2006-08" db="EMBL/GenBank/DDBJ databases">
        <title>Complete sequence of Alkalilimnicola ehrilichei MLHE-1.</title>
        <authorList>
            <person name="Copeland A."/>
            <person name="Lucas S."/>
            <person name="Lapidus A."/>
            <person name="Barry K."/>
            <person name="Detter J.C."/>
            <person name="Glavina del Rio T."/>
            <person name="Hammon N."/>
            <person name="Israni S."/>
            <person name="Dalin E."/>
            <person name="Tice H."/>
            <person name="Pitluck S."/>
            <person name="Sims D."/>
            <person name="Brettin T."/>
            <person name="Bruce D."/>
            <person name="Han C."/>
            <person name="Tapia R."/>
            <person name="Gilna P."/>
            <person name="Schmutz J."/>
            <person name="Larimer F."/>
            <person name="Land M."/>
            <person name="Hauser L."/>
            <person name="Kyrpides N."/>
            <person name="Mikhailova N."/>
            <person name="Oremland R.S."/>
            <person name="Hoeft S.E."/>
            <person name="Switzer-Blum J."/>
            <person name="Kulp T."/>
            <person name="King G."/>
            <person name="Tabita R."/>
            <person name="Witte B."/>
            <person name="Santini J.M."/>
            <person name="Basu P."/>
            <person name="Hollibaugh J.T."/>
            <person name="Xie G."/>
            <person name="Stolz J.F."/>
            <person name="Richardson P."/>
        </authorList>
    </citation>
    <scope>NUCLEOTIDE SEQUENCE [LARGE SCALE GENOMIC DNA]</scope>
    <source>
        <strain>ATCC BAA-1101 / DSM 17681 / MLHE-1</strain>
    </source>
</reference>
<accession>Q0ACP5</accession>